<protein>
    <recommendedName>
        <fullName evidence="1">Glycine dehydrogenase (decarboxylating)</fullName>
        <ecNumber evidence="1">1.4.4.2</ecNumber>
    </recommendedName>
    <alternativeName>
        <fullName evidence="1">Glycine cleavage system P-protein</fullName>
    </alternativeName>
    <alternativeName>
        <fullName evidence="1">Glycine decarboxylase</fullName>
    </alternativeName>
    <alternativeName>
        <fullName evidence="1">Glycine dehydrogenase (aminomethyl-transferring)</fullName>
    </alternativeName>
</protein>
<keyword id="KW-0560">Oxidoreductase</keyword>
<keyword id="KW-0663">Pyridoxal phosphate</keyword>
<dbReference type="EC" id="1.4.4.2" evidence="1"/>
<dbReference type="EMBL" id="CP000058">
    <property type="protein sequence ID" value="AAZ34685.1"/>
    <property type="molecule type" value="Genomic_DNA"/>
</dbReference>
<dbReference type="RefSeq" id="WP_011167929.1">
    <property type="nucleotide sequence ID" value="NC_005773.3"/>
</dbReference>
<dbReference type="SMR" id="Q48ME3"/>
<dbReference type="KEGG" id="psp:PSPPH_1162"/>
<dbReference type="eggNOG" id="COG0403">
    <property type="taxonomic scope" value="Bacteria"/>
</dbReference>
<dbReference type="eggNOG" id="COG1003">
    <property type="taxonomic scope" value="Bacteria"/>
</dbReference>
<dbReference type="HOGENOM" id="CLU_004620_1_1_6"/>
<dbReference type="Proteomes" id="UP000000551">
    <property type="component" value="Chromosome"/>
</dbReference>
<dbReference type="GO" id="GO:0005829">
    <property type="term" value="C:cytosol"/>
    <property type="evidence" value="ECO:0007669"/>
    <property type="project" value="TreeGrafter"/>
</dbReference>
<dbReference type="GO" id="GO:0005960">
    <property type="term" value="C:glycine cleavage complex"/>
    <property type="evidence" value="ECO:0007669"/>
    <property type="project" value="TreeGrafter"/>
</dbReference>
<dbReference type="GO" id="GO:0016594">
    <property type="term" value="F:glycine binding"/>
    <property type="evidence" value="ECO:0007669"/>
    <property type="project" value="TreeGrafter"/>
</dbReference>
<dbReference type="GO" id="GO:0004375">
    <property type="term" value="F:glycine dehydrogenase (decarboxylating) activity"/>
    <property type="evidence" value="ECO:0007669"/>
    <property type="project" value="UniProtKB-EC"/>
</dbReference>
<dbReference type="GO" id="GO:0030170">
    <property type="term" value="F:pyridoxal phosphate binding"/>
    <property type="evidence" value="ECO:0007669"/>
    <property type="project" value="TreeGrafter"/>
</dbReference>
<dbReference type="GO" id="GO:0019464">
    <property type="term" value="P:glycine decarboxylation via glycine cleavage system"/>
    <property type="evidence" value="ECO:0007669"/>
    <property type="project" value="UniProtKB-UniRule"/>
</dbReference>
<dbReference type="CDD" id="cd00613">
    <property type="entry name" value="GDC-P"/>
    <property type="match status" value="1"/>
</dbReference>
<dbReference type="FunFam" id="3.40.640.10:FF:000005">
    <property type="entry name" value="Glycine dehydrogenase (decarboxylating), mitochondrial"/>
    <property type="match status" value="1"/>
</dbReference>
<dbReference type="FunFam" id="3.90.1150.10:FF:000007">
    <property type="entry name" value="Glycine dehydrogenase (decarboxylating), mitochondrial"/>
    <property type="match status" value="1"/>
</dbReference>
<dbReference type="FunFam" id="3.40.640.10:FF:000007">
    <property type="entry name" value="glycine dehydrogenase (Decarboxylating), mitochondrial"/>
    <property type="match status" value="1"/>
</dbReference>
<dbReference type="Gene3D" id="3.90.1150.10">
    <property type="entry name" value="Aspartate Aminotransferase, domain 1"/>
    <property type="match status" value="2"/>
</dbReference>
<dbReference type="Gene3D" id="3.40.640.10">
    <property type="entry name" value="Type I PLP-dependent aspartate aminotransferase-like (Major domain)"/>
    <property type="match status" value="2"/>
</dbReference>
<dbReference type="HAMAP" id="MF_00711">
    <property type="entry name" value="GcvP"/>
    <property type="match status" value="1"/>
</dbReference>
<dbReference type="InterPro" id="IPR003437">
    <property type="entry name" value="GcvP"/>
</dbReference>
<dbReference type="InterPro" id="IPR049316">
    <property type="entry name" value="GDC-P_C"/>
</dbReference>
<dbReference type="InterPro" id="IPR049315">
    <property type="entry name" value="GDC-P_N"/>
</dbReference>
<dbReference type="InterPro" id="IPR020581">
    <property type="entry name" value="GDC_P"/>
</dbReference>
<dbReference type="InterPro" id="IPR015424">
    <property type="entry name" value="PyrdxlP-dep_Trfase"/>
</dbReference>
<dbReference type="InterPro" id="IPR015421">
    <property type="entry name" value="PyrdxlP-dep_Trfase_major"/>
</dbReference>
<dbReference type="InterPro" id="IPR015422">
    <property type="entry name" value="PyrdxlP-dep_Trfase_small"/>
</dbReference>
<dbReference type="NCBIfam" id="TIGR00461">
    <property type="entry name" value="gcvP"/>
    <property type="match status" value="1"/>
</dbReference>
<dbReference type="NCBIfam" id="NF003346">
    <property type="entry name" value="PRK04366.1"/>
    <property type="match status" value="1"/>
</dbReference>
<dbReference type="PANTHER" id="PTHR11773:SF1">
    <property type="entry name" value="GLYCINE DEHYDROGENASE (DECARBOXYLATING), MITOCHONDRIAL"/>
    <property type="match status" value="1"/>
</dbReference>
<dbReference type="PANTHER" id="PTHR11773">
    <property type="entry name" value="GLYCINE DEHYDROGENASE, DECARBOXYLATING"/>
    <property type="match status" value="1"/>
</dbReference>
<dbReference type="Pfam" id="PF21478">
    <property type="entry name" value="GcvP2_C"/>
    <property type="match status" value="1"/>
</dbReference>
<dbReference type="Pfam" id="PF02347">
    <property type="entry name" value="GDC-P"/>
    <property type="match status" value="2"/>
</dbReference>
<dbReference type="SUPFAM" id="SSF53383">
    <property type="entry name" value="PLP-dependent transferases"/>
    <property type="match status" value="2"/>
</dbReference>
<evidence type="ECO:0000255" key="1">
    <source>
        <dbReference type="HAMAP-Rule" id="MF_00711"/>
    </source>
</evidence>
<sequence>MTDRIELTTANEFIARHIGPRAADEQAMLQTLGFDSIEALSESVIPESIKGTSVLNLPAGQSEADALASIKAIASKNQLFKTYIGQGYYNTHTPAPILRNLLENPAWYTAYTPYQPEISQGRLESLLNFQTLISDLTGLPIANASLLDEATAAAEAMTFCKRLSKNKGSQQFFASSHCHPQTLDVLRTRAEPLGITVVVADEAELGDVSDYFGALLQYPASNGDVFDYRELVERFHAANALVAVAADLLALTLLTPPGEFGADVAIGSAQRFGVPLGFGGPHAAYFSTRDAFKRDMPGRLVGVSVDRHGKQALRLAMQTREQHIRREKATSNICTAQVLLANIASMYAVYHGPRGLTQIAKRVHQLTAILAEGLSTLGLKAEQAFFFDSLTLNTGSRTAALHAAARARHINLREIDDQHLGLSLDETTSQSAVETLWEIFASDGQNLPDFTALAASVPSRLPATLLRQSAILSHPVFNRYHSETELMRYLRKLADKDLALDRTMIPLGSCTMKLNAASEMIPVTWAEFGNLHPFAPAEQSTGYQQLTDELEAMLCAATGYDAISLQPNAGSQGEYAGLLAIRAYHQSRGDEHRDICLIPSSAHGTNPATANMAGMRVVVTACDARGNVDIEDLRAKTVQHRDQLAAIMITYPSTHGVFEEGIREICGIVHDNGGQVYIDGANMNAMVGLCAPGKFGGDVSHLNLHKTFCIPHGGGGPGVGPIGVKSHLAPFMPGHARMERKEGAVCAAPFGSASILPITWMYIRMMGGEGLKRASQLAILNANYISRRLEEHYPVLYTGTNGLVAHECILDLRPIKDSSGISVDDVAKRLIDFGFHAPTMSFPVAGTLMIEPTESESREELDRFCDAMIKIREEIRAVENGTLDKDDNPLKNAPHTAAEIVGQWSHPYSREQAVYPVDSLIENKYWPPVGRVDNVFGDRNLVCACPSIESYQEA</sequence>
<feature type="chain" id="PRO_0000227120" description="Glycine dehydrogenase (decarboxylating)">
    <location>
        <begin position="1"/>
        <end position="954"/>
    </location>
</feature>
<feature type="modified residue" description="N6-(pyridoxal phosphate)lysine" evidence="1">
    <location>
        <position position="706"/>
    </location>
</feature>
<accession>Q48ME3</accession>
<comment type="function">
    <text evidence="1">The glycine cleavage system catalyzes the degradation of glycine. The P protein binds the alpha-amino group of glycine through its pyridoxal phosphate cofactor; CO(2) is released and the remaining methylamine moiety is then transferred to the lipoamide cofactor of the H protein.</text>
</comment>
<comment type="catalytic activity">
    <reaction evidence="1">
        <text>N(6)-[(R)-lipoyl]-L-lysyl-[glycine-cleavage complex H protein] + glycine + H(+) = N(6)-[(R)-S(8)-aminomethyldihydrolipoyl]-L-lysyl-[glycine-cleavage complex H protein] + CO2</text>
        <dbReference type="Rhea" id="RHEA:24304"/>
        <dbReference type="Rhea" id="RHEA-COMP:10494"/>
        <dbReference type="Rhea" id="RHEA-COMP:10495"/>
        <dbReference type="ChEBI" id="CHEBI:15378"/>
        <dbReference type="ChEBI" id="CHEBI:16526"/>
        <dbReference type="ChEBI" id="CHEBI:57305"/>
        <dbReference type="ChEBI" id="CHEBI:83099"/>
        <dbReference type="ChEBI" id="CHEBI:83143"/>
        <dbReference type="EC" id="1.4.4.2"/>
    </reaction>
</comment>
<comment type="cofactor">
    <cofactor evidence="1">
        <name>pyridoxal 5'-phosphate</name>
        <dbReference type="ChEBI" id="CHEBI:597326"/>
    </cofactor>
</comment>
<comment type="subunit">
    <text evidence="1">The glycine cleavage system is composed of four proteins: P, T, L and H.</text>
</comment>
<comment type="similarity">
    <text evidence="1">Belongs to the GcvP family.</text>
</comment>
<organism>
    <name type="scientific">Pseudomonas savastanoi pv. phaseolicola (strain 1448A / Race 6)</name>
    <name type="common">Pseudomonas syringae pv. phaseolicola (strain 1448A / Race 6)</name>
    <dbReference type="NCBI Taxonomy" id="264730"/>
    <lineage>
        <taxon>Bacteria</taxon>
        <taxon>Pseudomonadati</taxon>
        <taxon>Pseudomonadota</taxon>
        <taxon>Gammaproteobacteria</taxon>
        <taxon>Pseudomonadales</taxon>
        <taxon>Pseudomonadaceae</taxon>
        <taxon>Pseudomonas</taxon>
    </lineage>
</organism>
<proteinExistence type="inferred from homology"/>
<gene>
    <name evidence="1" type="primary">gcvP</name>
    <name type="ordered locus">PSPPH_1162</name>
</gene>
<reference key="1">
    <citation type="journal article" date="2005" name="J. Bacteriol.">
        <title>Whole-genome sequence analysis of Pseudomonas syringae pv. phaseolicola 1448A reveals divergence among pathovars in genes involved in virulence and transposition.</title>
        <authorList>
            <person name="Joardar V."/>
            <person name="Lindeberg M."/>
            <person name="Jackson R.W."/>
            <person name="Selengut J."/>
            <person name="Dodson R."/>
            <person name="Brinkac L.M."/>
            <person name="Daugherty S.C."/>
            <person name="DeBoy R.T."/>
            <person name="Durkin A.S."/>
            <person name="Gwinn Giglio M."/>
            <person name="Madupu R."/>
            <person name="Nelson W.C."/>
            <person name="Rosovitz M.J."/>
            <person name="Sullivan S.A."/>
            <person name="Crabtree J."/>
            <person name="Creasy T."/>
            <person name="Davidsen T.M."/>
            <person name="Haft D.H."/>
            <person name="Zafar N."/>
            <person name="Zhou L."/>
            <person name="Halpin R."/>
            <person name="Holley T."/>
            <person name="Khouri H.M."/>
            <person name="Feldblyum T.V."/>
            <person name="White O."/>
            <person name="Fraser C.M."/>
            <person name="Chatterjee A.K."/>
            <person name="Cartinhour S."/>
            <person name="Schneider D."/>
            <person name="Mansfield J.W."/>
            <person name="Collmer A."/>
            <person name="Buell R."/>
        </authorList>
    </citation>
    <scope>NUCLEOTIDE SEQUENCE [LARGE SCALE GENOMIC DNA]</scope>
    <source>
        <strain>1448A / Race 6</strain>
    </source>
</reference>
<name>GCSP_PSE14</name>